<evidence type="ECO:0000255" key="1">
    <source>
        <dbReference type="HAMAP-Rule" id="MF_01325"/>
    </source>
</evidence>
<evidence type="ECO:0000305" key="2"/>
<sequence>MIGLIGRKVGMTRIFTEEGISIPVTVVEVEANRVTQVKSLETDGYNAIQITTGTKKANRVSKPAAGHFAKAGVEAGRGLWEFRLENGEEFAVGAELNVELFNEVKKVDVTGTSKGKGFQGVIKRWNFSTQDMTHGNSLSHRAPGSIGQCQTPGRVFKGKKMAGHMGAERVTTQNLEIVRVDAERNLLLIKGAVPGSIGGNVIVKPAVKA</sequence>
<reference key="1">
    <citation type="journal article" date="2005" name="Science">
        <title>Life at depth: Photobacterium profundum genome sequence and expression analysis.</title>
        <authorList>
            <person name="Vezzi A."/>
            <person name="Campanaro S."/>
            <person name="D'Angelo M."/>
            <person name="Simonato F."/>
            <person name="Vitulo N."/>
            <person name="Lauro F.M."/>
            <person name="Cestaro A."/>
            <person name="Malacrida G."/>
            <person name="Simionati B."/>
            <person name="Cannata N."/>
            <person name="Romualdi C."/>
            <person name="Bartlett D.H."/>
            <person name="Valle G."/>
        </authorList>
    </citation>
    <scope>NUCLEOTIDE SEQUENCE [LARGE SCALE GENOMIC DNA]</scope>
    <source>
        <strain>ATCC BAA-1253 / SS9</strain>
    </source>
</reference>
<feature type="chain" id="PRO_0000241384" description="Large ribosomal subunit protein uL3">
    <location>
        <begin position="1"/>
        <end position="209"/>
    </location>
</feature>
<feature type="modified residue" description="N5-methylglutamine" evidence="1">
    <location>
        <position position="150"/>
    </location>
</feature>
<proteinExistence type="inferred from homology"/>
<gene>
    <name evidence="1" type="primary">rplC</name>
    <name type="ordered locus">PBPRA0320</name>
</gene>
<organism>
    <name type="scientific">Photobacterium profundum (strain SS9)</name>
    <dbReference type="NCBI Taxonomy" id="298386"/>
    <lineage>
        <taxon>Bacteria</taxon>
        <taxon>Pseudomonadati</taxon>
        <taxon>Pseudomonadota</taxon>
        <taxon>Gammaproteobacteria</taxon>
        <taxon>Vibrionales</taxon>
        <taxon>Vibrionaceae</taxon>
        <taxon>Photobacterium</taxon>
    </lineage>
</organism>
<keyword id="KW-0488">Methylation</keyword>
<keyword id="KW-1185">Reference proteome</keyword>
<keyword id="KW-0687">Ribonucleoprotein</keyword>
<keyword id="KW-0689">Ribosomal protein</keyword>
<keyword id="KW-0694">RNA-binding</keyword>
<keyword id="KW-0699">rRNA-binding</keyword>
<accession>Q6LVB6</accession>
<dbReference type="EMBL" id="CR378663">
    <property type="protein sequence ID" value="CAG18759.1"/>
    <property type="molecule type" value="Genomic_DNA"/>
</dbReference>
<dbReference type="RefSeq" id="WP_011217129.1">
    <property type="nucleotide sequence ID" value="NC_006370.1"/>
</dbReference>
<dbReference type="SMR" id="Q6LVB6"/>
<dbReference type="STRING" id="298386.PBPRA0320"/>
<dbReference type="KEGG" id="ppr:PBPRA0320"/>
<dbReference type="eggNOG" id="COG0087">
    <property type="taxonomic scope" value="Bacteria"/>
</dbReference>
<dbReference type="HOGENOM" id="CLU_044142_4_1_6"/>
<dbReference type="Proteomes" id="UP000000593">
    <property type="component" value="Chromosome 1"/>
</dbReference>
<dbReference type="GO" id="GO:0022625">
    <property type="term" value="C:cytosolic large ribosomal subunit"/>
    <property type="evidence" value="ECO:0007669"/>
    <property type="project" value="TreeGrafter"/>
</dbReference>
<dbReference type="GO" id="GO:0019843">
    <property type="term" value="F:rRNA binding"/>
    <property type="evidence" value="ECO:0007669"/>
    <property type="project" value="UniProtKB-UniRule"/>
</dbReference>
<dbReference type="GO" id="GO:0003735">
    <property type="term" value="F:structural constituent of ribosome"/>
    <property type="evidence" value="ECO:0007669"/>
    <property type="project" value="InterPro"/>
</dbReference>
<dbReference type="GO" id="GO:0006412">
    <property type="term" value="P:translation"/>
    <property type="evidence" value="ECO:0007669"/>
    <property type="project" value="UniProtKB-UniRule"/>
</dbReference>
<dbReference type="FunFam" id="2.40.30.10:FF:000004">
    <property type="entry name" value="50S ribosomal protein L3"/>
    <property type="match status" value="1"/>
</dbReference>
<dbReference type="FunFam" id="3.30.160.810:FF:000001">
    <property type="entry name" value="50S ribosomal protein L3"/>
    <property type="match status" value="1"/>
</dbReference>
<dbReference type="Gene3D" id="3.30.160.810">
    <property type="match status" value="1"/>
</dbReference>
<dbReference type="Gene3D" id="2.40.30.10">
    <property type="entry name" value="Translation factors"/>
    <property type="match status" value="1"/>
</dbReference>
<dbReference type="HAMAP" id="MF_01325_B">
    <property type="entry name" value="Ribosomal_uL3_B"/>
    <property type="match status" value="1"/>
</dbReference>
<dbReference type="InterPro" id="IPR000597">
    <property type="entry name" value="Ribosomal_uL3"/>
</dbReference>
<dbReference type="InterPro" id="IPR019927">
    <property type="entry name" value="Ribosomal_uL3_bac/org-type"/>
</dbReference>
<dbReference type="InterPro" id="IPR019926">
    <property type="entry name" value="Ribosomal_uL3_CS"/>
</dbReference>
<dbReference type="InterPro" id="IPR009000">
    <property type="entry name" value="Transl_B-barrel_sf"/>
</dbReference>
<dbReference type="NCBIfam" id="TIGR03625">
    <property type="entry name" value="L3_bact"/>
    <property type="match status" value="1"/>
</dbReference>
<dbReference type="PANTHER" id="PTHR11229">
    <property type="entry name" value="50S RIBOSOMAL PROTEIN L3"/>
    <property type="match status" value="1"/>
</dbReference>
<dbReference type="PANTHER" id="PTHR11229:SF16">
    <property type="entry name" value="LARGE RIBOSOMAL SUBUNIT PROTEIN UL3C"/>
    <property type="match status" value="1"/>
</dbReference>
<dbReference type="Pfam" id="PF00297">
    <property type="entry name" value="Ribosomal_L3"/>
    <property type="match status" value="1"/>
</dbReference>
<dbReference type="SUPFAM" id="SSF50447">
    <property type="entry name" value="Translation proteins"/>
    <property type="match status" value="1"/>
</dbReference>
<dbReference type="PROSITE" id="PS00474">
    <property type="entry name" value="RIBOSOMAL_L3"/>
    <property type="match status" value="1"/>
</dbReference>
<comment type="function">
    <text evidence="1">One of the primary rRNA binding proteins, it binds directly near the 3'-end of the 23S rRNA, where it nucleates assembly of the 50S subunit.</text>
</comment>
<comment type="subunit">
    <text evidence="1">Part of the 50S ribosomal subunit. Forms a cluster with proteins L14 and L19.</text>
</comment>
<comment type="PTM">
    <text evidence="1">Methylated by PrmB.</text>
</comment>
<comment type="similarity">
    <text evidence="1">Belongs to the universal ribosomal protein uL3 family.</text>
</comment>
<name>RL3_PHOPR</name>
<protein>
    <recommendedName>
        <fullName evidence="1">Large ribosomal subunit protein uL3</fullName>
    </recommendedName>
    <alternativeName>
        <fullName evidence="2">50S ribosomal protein L3</fullName>
    </alternativeName>
</protein>